<gene>
    <name type="primary">Rps23</name>
</gene>
<dbReference type="EMBL" id="X77398">
    <property type="protein sequence ID" value="CAA54584.1"/>
    <property type="molecule type" value="Genomic_DNA"/>
</dbReference>
<dbReference type="EMBL" id="BC058134">
    <property type="protein sequence ID" value="AAH58134.1"/>
    <property type="molecule type" value="mRNA"/>
</dbReference>
<dbReference type="PIR" id="S41955">
    <property type="entry name" value="S41955"/>
</dbReference>
<dbReference type="RefSeq" id="NP_511172.1">
    <property type="nucleotide sequence ID" value="NM_078617.3"/>
</dbReference>
<dbReference type="SMR" id="P62268"/>
<dbReference type="BioGRID" id="250780">
    <property type="interactions" value="2"/>
</dbReference>
<dbReference type="FunCoup" id="P62268">
    <property type="interactions" value="2761"/>
</dbReference>
<dbReference type="IntAct" id="P62268">
    <property type="interactions" value="2"/>
</dbReference>
<dbReference type="STRING" id="10116.ENSRNOP00000022348"/>
<dbReference type="iPTMnet" id="P62268"/>
<dbReference type="PhosphoSitePlus" id="P62268"/>
<dbReference type="SwissPalm" id="P62268"/>
<dbReference type="jPOST" id="P62268"/>
<dbReference type="PaxDb" id="10116-ENSRNOP00000022348"/>
<dbReference type="GeneID" id="124323"/>
<dbReference type="KEGG" id="rno:124323"/>
<dbReference type="UCSC" id="RGD:621039">
    <property type="organism name" value="rat"/>
</dbReference>
<dbReference type="AGR" id="RGD:621039"/>
<dbReference type="CTD" id="6228"/>
<dbReference type="RGD" id="621039">
    <property type="gene designation" value="Rps23"/>
</dbReference>
<dbReference type="VEuPathDB" id="HostDB:ENSRNOG00000016580"/>
<dbReference type="eggNOG" id="KOG1749">
    <property type="taxonomic scope" value="Eukaryota"/>
</dbReference>
<dbReference type="HOGENOM" id="CLU_115574_0_1_1"/>
<dbReference type="InParanoid" id="P62268"/>
<dbReference type="OrthoDB" id="8477at9989"/>
<dbReference type="PhylomeDB" id="P62268"/>
<dbReference type="TreeFam" id="TF300871"/>
<dbReference type="Reactome" id="R-RNO-156827">
    <property type="pathway name" value="L13a-mediated translational silencing of Ceruloplasmin expression"/>
</dbReference>
<dbReference type="Reactome" id="R-RNO-1799339">
    <property type="pathway name" value="SRP-dependent cotranslational protein targeting to membrane"/>
</dbReference>
<dbReference type="Reactome" id="R-RNO-6791226">
    <property type="pathway name" value="Major pathway of rRNA processing in the nucleolus and cytosol"/>
</dbReference>
<dbReference type="Reactome" id="R-RNO-72649">
    <property type="pathway name" value="Translation initiation complex formation"/>
</dbReference>
<dbReference type="Reactome" id="R-RNO-72689">
    <property type="pathway name" value="Formation of a pool of free 40S subunits"/>
</dbReference>
<dbReference type="Reactome" id="R-RNO-72695">
    <property type="pathway name" value="Formation of the ternary complex, and subsequently, the 43S complex"/>
</dbReference>
<dbReference type="Reactome" id="R-RNO-72702">
    <property type="pathway name" value="Ribosomal scanning and start codon recognition"/>
</dbReference>
<dbReference type="Reactome" id="R-RNO-72706">
    <property type="pathway name" value="GTP hydrolysis and joining of the 60S ribosomal subunit"/>
</dbReference>
<dbReference type="Reactome" id="R-RNO-9629569">
    <property type="pathway name" value="Protein hydroxylation"/>
</dbReference>
<dbReference type="Reactome" id="R-RNO-975956">
    <property type="pathway name" value="Nonsense Mediated Decay (NMD) independent of the Exon Junction Complex (EJC)"/>
</dbReference>
<dbReference type="Reactome" id="R-RNO-975957">
    <property type="pathway name" value="Nonsense Mediated Decay (NMD) enhanced by the Exon Junction Complex (EJC)"/>
</dbReference>
<dbReference type="PRO" id="PR:P62268"/>
<dbReference type="Proteomes" id="UP000002494">
    <property type="component" value="Chromosome 2"/>
</dbReference>
<dbReference type="Bgee" id="ENSRNOG00000016580">
    <property type="expression patterns" value="Expressed in thymus and 19 other cell types or tissues"/>
</dbReference>
<dbReference type="GO" id="GO:0098556">
    <property type="term" value="C:cytoplasmic side of rough endoplasmic reticulum membrane"/>
    <property type="evidence" value="ECO:0000266"/>
    <property type="project" value="RGD"/>
</dbReference>
<dbReference type="GO" id="GO:0022626">
    <property type="term" value="C:cytosolic ribosome"/>
    <property type="evidence" value="ECO:0000266"/>
    <property type="project" value="RGD"/>
</dbReference>
<dbReference type="GO" id="GO:0022627">
    <property type="term" value="C:cytosolic small ribosomal subunit"/>
    <property type="evidence" value="ECO:0000314"/>
    <property type="project" value="RGD"/>
</dbReference>
<dbReference type="GO" id="GO:0005730">
    <property type="term" value="C:nucleolus"/>
    <property type="evidence" value="ECO:0007669"/>
    <property type="project" value="UniProtKB-SubCell"/>
</dbReference>
<dbReference type="GO" id="GO:0005840">
    <property type="term" value="C:ribosome"/>
    <property type="evidence" value="ECO:0000318"/>
    <property type="project" value="GO_Central"/>
</dbReference>
<dbReference type="GO" id="GO:0015935">
    <property type="term" value="C:small ribosomal subunit"/>
    <property type="evidence" value="ECO:0000314"/>
    <property type="project" value="RGD"/>
</dbReference>
<dbReference type="GO" id="GO:0032040">
    <property type="term" value="C:small-subunit processome"/>
    <property type="evidence" value="ECO:0000250"/>
    <property type="project" value="UniProtKB"/>
</dbReference>
<dbReference type="GO" id="GO:0045202">
    <property type="term" value="C:synapse"/>
    <property type="evidence" value="ECO:0000266"/>
    <property type="project" value="RGD"/>
</dbReference>
<dbReference type="GO" id="GO:0003735">
    <property type="term" value="F:structural constituent of ribosome"/>
    <property type="evidence" value="ECO:0000250"/>
    <property type="project" value="UniProtKB"/>
</dbReference>
<dbReference type="GO" id="GO:0045182">
    <property type="term" value="F:translation regulator activity"/>
    <property type="evidence" value="ECO:0000303"/>
    <property type="project" value="UniProtKB"/>
</dbReference>
<dbReference type="GO" id="GO:0002181">
    <property type="term" value="P:cytoplasmic translation"/>
    <property type="evidence" value="ECO:0000250"/>
    <property type="project" value="UniProtKB"/>
</dbReference>
<dbReference type="GO" id="GO:1990145">
    <property type="term" value="P:maintenance of translational fidelity"/>
    <property type="evidence" value="ECO:0000250"/>
    <property type="project" value="UniProtKB"/>
</dbReference>
<dbReference type="GO" id="GO:0042274">
    <property type="term" value="P:ribosomal small subunit biogenesis"/>
    <property type="evidence" value="ECO:0000250"/>
    <property type="project" value="UniProtKB"/>
</dbReference>
<dbReference type="GO" id="GO:0034063">
    <property type="term" value="P:stress granule assembly"/>
    <property type="evidence" value="ECO:0000266"/>
    <property type="project" value="RGD"/>
</dbReference>
<dbReference type="GO" id="GO:0006412">
    <property type="term" value="P:translation"/>
    <property type="evidence" value="ECO:0000250"/>
    <property type="project" value="UniProtKB"/>
</dbReference>
<dbReference type="CDD" id="cd03367">
    <property type="entry name" value="Ribosomal_S23"/>
    <property type="match status" value="1"/>
</dbReference>
<dbReference type="FunFam" id="2.40.50.140:FF:000007">
    <property type="entry name" value="40S ribosomal protein S23"/>
    <property type="match status" value="1"/>
</dbReference>
<dbReference type="Gene3D" id="2.40.50.140">
    <property type="entry name" value="Nucleic acid-binding proteins"/>
    <property type="match status" value="1"/>
</dbReference>
<dbReference type="InterPro" id="IPR012340">
    <property type="entry name" value="NA-bd_OB-fold"/>
</dbReference>
<dbReference type="InterPro" id="IPR006032">
    <property type="entry name" value="Ribosomal_uS12"/>
</dbReference>
<dbReference type="InterPro" id="IPR005680">
    <property type="entry name" value="Ribosomal_uS12_euk/arc"/>
</dbReference>
<dbReference type="NCBIfam" id="NF003254">
    <property type="entry name" value="PRK04211.1"/>
    <property type="match status" value="1"/>
</dbReference>
<dbReference type="NCBIfam" id="TIGR00982">
    <property type="entry name" value="uS12_E_A"/>
    <property type="match status" value="1"/>
</dbReference>
<dbReference type="PANTHER" id="PTHR11652">
    <property type="entry name" value="30S RIBOSOMAL PROTEIN S12 FAMILY MEMBER"/>
    <property type="match status" value="1"/>
</dbReference>
<dbReference type="Pfam" id="PF00164">
    <property type="entry name" value="Ribosom_S12_S23"/>
    <property type="match status" value="1"/>
</dbReference>
<dbReference type="PIRSF" id="PIRSF002133">
    <property type="entry name" value="Ribosomal_S12/S23"/>
    <property type="match status" value="1"/>
</dbReference>
<dbReference type="SUPFAM" id="SSF50249">
    <property type="entry name" value="Nucleic acid-binding proteins"/>
    <property type="match status" value="1"/>
</dbReference>
<dbReference type="PROSITE" id="PS00055">
    <property type="entry name" value="RIBOSOMAL_S12"/>
    <property type="match status" value="1"/>
</dbReference>
<evidence type="ECO:0000250" key="1">
    <source>
        <dbReference type="UniProtKB" id="P62266"/>
    </source>
</evidence>
<evidence type="ECO:0000250" key="2">
    <source>
        <dbReference type="UniProtKB" id="P62267"/>
    </source>
</evidence>
<evidence type="ECO:0000250" key="3">
    <source>
        <dbReference type="UniProtKB" id="Q6SA96"/>
    </source>
</evidence>
<evidence type="ECO:0000256" key="4">
    <source>
        <dbReference type="SAM" id="MobiDB-lite"/>
    </source>
</evidence>
<evidence type="ECO:0000269" key="5">
    <source>
    </source>
</evidence>
<evidence type="ECO:0000305" key="6"/>
<feature type="initiator methionine" description="Removed" evidence="5">
    <location>
        <position position="1"/>
    </location>
</feature>
<feature type="chain" id="PRO_0000146460" description="Small ribosomal subunit protein uS12">
    <location>
        <begin position="2"/>
        <end position="143"/>
    </location>
</feature>
<feature type="region of interest" description="Disordered" evidence="4">
    <location>
        <begin position="1"/>
        <end position="26"/>
    </location>
</feature>
<feature type="compositionally biased region" description="Basic residues" evidence="4">
    <location>
        <begin position="1"/>
        <end position="20"/>
    </location>
</feature>
<feature type="modified residue" description="N6-succinyllysine" evidence="2">
    <location>
        <position position="54"/>
    </location>
</feature>
<feature type="modified residue" description="3-hydroxyproline" evidence="1">
    <location>
        <position position="62"/>
    </location>
</feature>
<feature type="modified residue" description="N6-acetyllysine" evidence="1">
    <location>
        <position position="135"/>
    </location>
</feature>
<feature type="cross-link" description="Glycyl lysine isopeptide (Lys-Gly) (interchain with G-Cter in SUMO2)" evidence="1">
    <location>
        <position position="37"/>
    </location>
</feature>
<organism>
    <name type="scientific">Rattus norvegicus</name>
    <name type="common">Rat</name>
    <dbReference type="NCBI Taxonomy" id="10116"/>
    <lineage>
        <taxon>Eukaryota</taxon>
        <taxon>Metazoa</taxon>
        <taxon>Chordata</taxon>
        <taxon>Craniata</taxon>
        <taxon>Vertebrata</taxon>
        <taxon>Euteleostomi</taxon>
        <taxon>Mammalia</taxon>
        <taxon>Eutheria</taxon>
        <taxon>Euarchontoglires</taxon>
        <taxon>Glires</taxon>
        <taxon>Rodentia</taxon>
        <taxon>Myomorpha</taxon>
        <taxon>Muroidea</taxon>
        <taxon>Muridae</taxon>
        <taxon>Murinae</taxon>
        <taxon>Rattus</taxon>
    </lineage>
</organism>
<sequence length="143" mass="15808">MGKCRGLRTARKLRSHRRDQKWHDKQYKKAHLGTALKANPFGGASHAKGIVLEKVGVEAKQPNSAIRKCVRVQLIKNGKKITAFVPNDGCLNFIEENDEVLVAGFGRKGHAVGDIPGVRFKVVKVANVSLLALYKGKKERPRS</sequence>
<keyword id="KW-0007">Acetylation</keyword>
<keyword id="KW-0963">Cytoplasm</keyword>
<keyword id="KW-0903">Direct protein sequencing</keyword>
<keyword id="KW-0256">Endoplasmic reticulum</keyword>
<keyword id="KW-0379">Hydroxylation</keyword>
<keyword id="KW-1017">Isopeptide bond</keyword>
<keyword id="KW-0539">Nucleus</keyword>
<keyword id="KW-1185">Reference proteome</keyword>
<keyword id="KW-0687">Ribonucleoprotein</keyword>
<keyword id="KW-0689">Ribosomal protein</keyword>
<keyword id="KW-0832">Ubl conjugation</keyword>
<comment type="function">
    <text evidence="1">Component of the ribosome, a large ribonucleoprotein complex responsible for the synthesis of proteins in the cell. The small ribosomal subunit (SSU) binds messenger RNAs (mRNAs) and translates the encoded message by selecting cognate aminoacyl-transfer RNA (tRNA) molecules. The large subunit (LSU) contains the ribosomal catalytic site termed the peptidyl transferase center (PTC), which catalyzes the formation of peptide bonds, thereby polymerizing the amino acids delivered by tRNAs into a polypeptide chain. The nascent polypeptides leave the ribosome through a tunnel in the LSU and interact with protein factors that function in enzymatic processing, targeting, and the membrane insertion of nascent chains at the exit of the ribosomal tunnel. Plays an important role in translational accuracy. Part of the small subunit (SSU) processome, first precursor of the small eukaryotic ribosomal subunit. During the assembly of the SSU processome in the nucleolus, many ribosome biogenesis factors, an RNA chaperone and ribosomal proteins associate with the nascent pre-rRNA and work in concert to generate RNA folding, modifications, rearrangements and cleavage as well as targeted degradation of pre-ribosomal RNA by the RNA exosome.</text>
</comment>
<comment type="subunit">
    <text evidence="1">Component of the 40S small ribosomal subunit. Part of the small subunit (SSU) processome, composed of more than 70 proteins and the RNA chaperone small nucleolar RNA (snoRNA) U3.</text>
</comment>
<comment type="subcellular location">
    <subcellularLocation>
        <location evidence="1">Cytoplasm</location>
        <location evidence="1">Cytosol</location>
    </subcellularLocation>
    <subcellularLocation>
        <location evidence="1">Cytoplasm</location>
    </subcellularLocation>
    <subcellularLocation>
        <location evidence="3">Rough endoplasmic reticulum</location>
    </subcellularLocation>
    <subcellularLocation>
        <location evidence="1">Nucleus</location>
        <location evidence="1">Nucleolus</location>
    </subcellularLocation>
    <text evidence="1 3">Detected on cytosolic polysomes (By similarity). Detected in ribosomes that are associated with the rough endoplasmic reticulum (By similarity).</text>
</comment>
<comment type="PTM">
    <text evidence="1">Hydroxylation at Pro-62 affects translation termination efficiency.</text>
</comment>
<comment type="similarity">
    <text evidence="6">Belongs to the universal ribosomal protein uS12 family.</text>
</comment>
<accession>P62268</accession>
<accession>P39028</accession>
<name>RS23_RAT</name>
<reference key="1">
    <citation type="journal article" date="1994" name="Biochem. Biophys. Res. Commun.">
        <title>The primary structure of rat ribosomal protein S23.</title>
        <authorList>
            <person name="Kitaoka Y."/>
            <person name="Olvera J."/>
            <person name="Wool I.G."/>
        </authorList>
    </citation>
    <scope>NUCLEOTIDE SEQUENCE [GENOMIC DNA]</scope>
    <scope>PROTEIN SEQUENCE OF 2-16 AND 115-125</scope>
    <source>
        <strain>Sprague-Dawley</strain>
        <tissue>Liver</tissue>
    </source>
</reference>
<reference key="2">
    <citation type="journal article" date="2004" name="Genome Res.">
        <title>The status, quality, and expansion of the NIH full-length cDNA project: the Mammalian Gene Collection (MGC).</title>
        <authorList>
            <consortium name="The MGC Project Team"/>
        </authorList>
    </citation>
    <scope>NUCLEOTIDE SEQUENCE [LARGE SCALE MRNA]</scope>
    <source>
        <tissue>Pituitary</tissue>
    </source>
</reference>
<protein>
    <recommendedName>
        <fullName evidence="6">Small ribosomal subunit protein uS12</fullName>
    </recommendedName>
    <alternativeName>
        <fullName>40S ribosomal protein S23</fullName>
    </alternativeName>
</protein>
<proteinExistence type="evidence at protein level"/>